<dbReference type="EC" id="2.7.7.7"/>
<dbReference type="EMBL" id="AE014075">
    <property type="protein sequence ID" value="AAN78860.1"/>
    <property type="molecule type" value="Genomic_DNA"/>
</dbReference>
<dbReference type="RefSeq" id="WP_001226161.1">
    <property type="nucleotide sequence ID" value="NZ_CP051263.1"/>
</dbReference>
<dbReference type="SMR" id="P59477"/>
<dbReference type="STRING" id="199310.c0379"/>
<dbReference type="KEGG" id="ecc:c0379"/>
<dbReference type="eggNOG" id="COG0389">
    <property type="taxonomic scope" value="Bacteria"/>
</dbReference>
<dbReference type="HOGENOM" id="CLU_012348_1_2_6"/>
<dbReference type="BioCyc" id="ECOL199310:C0379-MONOMER"/>
<dbReference type="Proteomes" id="UP000001410">
    <property type="component" value="Chromosome"/>
</dbReference>
<dbReference type="GO" id="GO:0005829">
    <property type="term" value="C:cytosol"/>
    <property type="evidence" value="ECO:0007669"/>
    <property type="project" value="TreeGrafter"/>
</dbReference>
<dbReference type="GO" id="GO:0003684">
    <property type="term" value="F:damaged DNA binding"/>
    <property type="evidence" value="ECO:0007669"/>
    <property type="project" value="InterPro"/>
</dbReference>
<dbReference type="GO" id="GO:0003887">
    <property type="term" value="F:DNA-directed DNA polymerase activity"/>
    <property type="evidence" value="ECO:0007669"/>
    <property type="project" value="UniProtKB-UniRule"/>
</dbReference>
<dbReference type="GO" id="GO:0000287">
    <property type="term" value="F:magnesium ion binding"/>
    <property type="evidence" value="ECO:0007669"/>
    <property type="project" value="UniProtKB-UniRule"/>
</dbReference>
<dbReference type="GO" id="GO:0006261">
    <property type="term" value="P:DNA-templated DNA replication"/>
    <property type="evidence" value="ECO:0007669"/>
    <property type="project" value="UniProtKB-UniRule"/>
</dbReference>
<dbReference type="GO" id="GO:0042276">
    <property type="term" value="P:error-prone translesion synthesis"/>
    <property type="evidence" value="ECO:0007669"/>
    <property type="project" value="TreeGrafter"/>
</dbReference>
<dbReference type="GO" id="GO:0009432">
    <property type="term" value="P:SOS response"/>
    <property type="evidence" value="ECO:0007669"/>
    <property type="project" value="TreeGrafter"/>
</dbReference>
<dbReference type="CDD" id="cd03586">
    <property type="entry name" value="PolY_Pol_IV_kappa"/>
    <property type="match status" value="1"/>
</dbReference>
<dbReference type="FunFam" id="1.10.150.20:FF:000019">
    <property type="entry name" value="DNA polymerase IV"/>
    <property type="match status" value="1"/>
</dbReference>
<dbReference type="FunFam" id="3.30.1490.100:FF:000002">
    <property type="entry name" value="DNA polymerase IV"/>
    <property type="match status" value="1"/>
</dbReference>
<dbReference type="FunFam" id="3.30.70.270:FF:000002">
    <property type="entry name" value="DNA polymerase IV"/>
    <property type="match status" value="1"/>
</dbReference>
<dbReference type="FunFam" id="3.40.1170.60:FF:000001">
    <property type="entry name" value="DNA polymerase IV"/>
    <property type="match status" value="1"/>
</dbReference>
<dbReference type="Gene3D" id="3.30.70.270">
    <property type="match status" value="1"/>
</dbReference>
<dbReference type="Gene3D" id="3.40.1170.60">
    <property type="match status" value="1"/>
</dbReference>
<dbReference type="Gene3D" id="1.10.150.20">
    <property type="entry name" value="5' to 3' exonuclease, C-terminal subdomain"/>
    <property type="match status" value="1"/>
</dbReference>
<dbReference type="Gene3D" id="3.30.1490.100">
    <property type="entry name" value="DNA polymerase, Y-family, little finger domain"/>
    <property type="match status" value="1"/>
</dbReference>
<dbReference type="HAMAP" id="MF_01113">
    <property type="entry name" value="DNApol_IV"/>
    <property type="match status" value="1"/>
</dbReference>
<dbReference type="InterPro" id="IPR043502">
    <property type="entry name" value="DNA/RNA_pol_sf"/>
</dbReference>
<dbReference type="InterPro" id="IPR036775">
    <property type="entry name" value="DNA_pol_Y-fam_lit_finger_sf"/>
</dbReference>
<dbReference type="InterPro" id="IPR017961">
    <property type="entry name" value="DNA_pol_Y-fam_little_finger"/>
</dbReference>
<dbReference type="InterPro" id="IPR050116">
    <property type="entry name" value="DNA_polymerase-Y"/>
</dbReference>
<dbReference type="InterPro" id="IPR022880">
    <property type="entry name" value="DNApol_IV"/>
</dbReference>
<dbReference type="InterPro" id="IPR053848">
    <property type="entry name" value="IMS_HHH_1"/>
</dbReference>
<dbReference type="InterPro" id="IPR043128">
    <property type="entry name" value="Rev_trsase/Diguanyl_cyclase"/>
</dbReference>
<dbReference type="InterPro" id="IPR001126">
    <property type="entry name" value="UmuC"/>
</dbReference>
<dbReference type="NCBIfam" id="NF002677">
    <property type="entry name" value="PRK02406.1"/>
    <property type="match status" value="1"/>
</dbReference>
<dbReference type="PANTHER" id="PTHR11076:SF33">
    <property type="entry name" value="DNA POLYMERASE KAPPA"/>
    <property type="match status" value="1"/>
</dbReference>
<dbReference type="PANTHER" id="PTHR11076">
    <property type="entry name" value="DNA REPAIR POLYMERASE UMUC / TRANSFERASE FAMILY MEMBER"/>
    <property type="match status" value="1"/>
</dbReference>
<dbReference type="Pfam" id="PF00817">
    <property type="entry name" value="IMS"/>
    <property type="match status" value="1"/>
</dbReference>
<dbReference type="Pfam" id="PF11799">
    <property type="entry name" value="IMS_C"/>
    <property type="match status" value="1"/>
</dbReference>
<dbReference type="Pfam" id="PF21999">
    <property type="entry name" value="IMS_HHH_1"/>
    <property type="match status" value="1"/>
</dbReference>
<dbReference type="SUPFAM" id="SSF56672">
    <property type="entry name" value="DNA/RNA polymerases"/>
    <property type="match status" value="1"/>
</dbReference>
<dbReference type="SUPFAM" id="SSF100879">
    <property type="entry name" value="Lesion bypass DNA polymerase (Y-family), little finger domain"/>
    <property type="match status" value="1"/>
</dbReference>
<dbReference type="PROSITE" id="PS50173">
    <property type="entry name" value="UMUC"/>
    <property type="match status" value="1"/>
</dbReference>
<organism>
    <name type="scientific">Escherichia coli O6:H1 (strain CFT073 / ATCC 700928 / UPEC)</name>
    <dbReference type="NCBI Taxonomy" id="199310"/>
    <lineage>
        <taxon>Bacteria</taxon>
        <taxon>Pseudomonadati</taxon>
        <taxon>Pseudomonadota</taxon>
        <taxon>Gammaproteobacteria</taxon>
        <taxon>Enterobacterales</taxon>
        <taxon>Enterobacteriaceae</taxon>
        <taxon>Escherichia</taxon>
    </lineage>
</organism>
<feature type="chain" id="PRO_0000173913" description="DNA polymerase IV">
    <location>
        <begin position="1"/>
        <end position="351"/>
    </location>
</feature>
<feature type="domain" description="UmuC">
    <location>
        <begin position="4"/>
        <end position="185"/>
    </location>
</feature>
<feature type="active site" evidence="1">
    <location>
        <position position="104"/>
    </location>
</feature>
<feature type="binding site" evidence="1">
    <location>
        <position position="8"/>
    </location>
    <ligand>
        <name>Mg(2+)</name>
        <dbReference type="ChEBI" id="CHEBI:18420"/>
    </ligand>
</feature>
<feature type="binding site" evidence="1">
    <location>
        <position position="103"/>
    </location>
    <ligand>
        <name>Mg(2+)</name>
        <dbReference type="ChEBI" id="CHEBI:18420"/>
    </ligand>
</feature>
<feature type="site" description="Substrate discrimination" evidence="1">
    <location>
        <position position="13"/>
    </location>
</feature>
<comment type="function">
    <text evidence="1">Poorly processive, error-prone DNA polymerase involved in untargeted mutagenesis. Copies undamaged DNA at stalled replication forks, which arise in vivo from mismatched or misaligned primer ends. These misaligned primers can be extended by PolIV. Exhibits no 3'-5' exonuclease (proofreading) activity. May be involved in translesional synthesis, in conjunction with the beta clamp from PolIII (By similarity).</text>
</comment>
<comment type="catalytic activity">
    <reaction>
        <text>DNA(n) + a 2'-deoxyribonucleoside 5'-triphosphate = DNA(n+1) + diphosphate</text>
        <dbReference type="Rhea" id="RHEA:22508"/>
        <dbReference type="Rhea" id="RHEA-COMP:17339"/>
        <dbReference type="Rhea" id="RHEA-COMP:17340"/>
        <dbReference type="ChEBI" id="CHEBI:33019"/>
        <dbReference type="ChEBI" id="CHEBI:61560"/>
        <dbReference type="ChEBI" id="CHEBI:173112"/>
        <dbReference type="EC" id="2.7.7.7"/>
    </reaction>
</comment>
<comment type="cofactor">
    <cofactor evidence="1">
        <name>Mg(2+)</name>
        <dbReference type="ChEBI" id="CHEBI:18420"/>
    </cofactor>
    <text evidence="1">Binds 2 magnesium ions per subunit.</text>
</comment>
<comment type="subunit">
    <text evidence="1">Monomer.</text>
</comment>
<comment type="subcellular location">
    <subcellularLocation>
        <location evidence="1">Cytoplasm</location>
    </subcellularLocation>
</comment>
<comment type="similarity">
    <text evidence="2">Belongs to the DNA polymerase type-Y family.</text>
</comment>
<accession>P59477</accession>
<proteinExistence type="inferred from homology"/>
<keyword id="KW-0963">Cytoplasm</keyword>
<keyword id="KW-0227">DNA damage</keyword>
<keyword id="KW-0234">DNA repair</keyword>
<keyword id="KW-0235">DNA replication</keyword>
<keyword id="KW-0238">DNA-binding</keyword>
<keyword id="KW-0239">DNA-directed DNA polymerase</keyword>
<keyword id="KW-0460">Magnesium</keyword>
<keyword id="KW-0479">Metal-binding</keyword>
<keyword id="KW-0515">Mutator protein</keyword>
<keyword id="KW-0548">Nucleotidyltransferase</keyword>
<keyword id="KW-1185">Reference proteome</keyword>
<keyword id="KW-0808">Transferase</keyword>
<name>DPO4_ECOL6</name>
<sequence length="351" mass="39498">MRKIIHVDMDCFFAAVEMRDNPALRDIPIAIGGSRERRGVISTANYPARKFGVRSAMPTGMALKLCPHLTLLPGRFDAYKEASNHIREIFSRYTSRIEPLSLDEAYLDVTDSVHCHGSATLIAQEIRQTIFNELQLTASAGVAPVKFLAKIASDMNKPNGQFVITPAEVPAFLQTLPLAKIPGVGKVSAAKLEAMGLRTCGDVQKCDLVILLKRFGKFGRILWERSQGIDERDVNSERLRKSVGVERTMAEDIHHWSECEAIIERLYPELERRLAKVKPDLLIARQGVKLKFDDFQQTTQEHVWPRLNKADLIATARKTWDERRGGRGVRLVGLHVTLLDPQMERQLVLGL</sequence>
<protein>
    <recommendedName>
        <fullName>DNA polymerase IV</fullName>
        <shortName>Pol IV</shortName>
        <ecNumber>2.7.7.7</ecNumber>
    </recommendedName>
</protein>
<evidence type="ECO:0000250" key="1"/>
<evidence type="ECO:0000305" key="2"/>
<gene>
    <name type="primary">dinB</name>
    <name type="synonym">dinP</name>
    <name type="ordered locus">c0379</name>
</gene>
<reference key="1">
    <citation type="journal article" date="2002" name="Proc. Natl. Acad. Sci. U.S.A.">
        <title>Extensive mosaic structure revealed by the complete genome sequence of uropathogenic Escherichia coli.</title>
        <authorList>
            <person name="Welch R.A."/>
            <person name="Burland V."/>
            <person name="Plunkett G. III"/>
            <person name="Redford P."/>
            <person name="Roesch P."/>
            <person name="Rasko D."/>
            <person name="Buckles E.L."/>
            <person name="Liou S.-R."/>
            <person name="Boutin A."/>
            <person name="Hackett J."/>
            <person name="Stroud D."/>
            <person name="Mayhew G.F."/>
            <person name="Rose D.J."/>
            <person name="Zhou S."/>
            <person name="Schwartz D.C."/>
            <person name="Perna N.T."/>
            <person name="Mobley H.L.T."/>
            <person name="Donnenberg M.S."/>
            <person name="Blattner F.R."/>
        </authorList>
    </citation>
    <scope>NUCLEOTIDE SEQUENCE [LARGE SCALE GENOMIC DNA]</scope>
    <source>
        <strain>CFT073 / ATCC 700928 / UPEC</strain>
    </source>
</reference>